<feature type="signal peptide" evidence="7 8 9">
    <location>
        <begin position="1"/>
        <end position="22"/>
    </location>
</feature>
<feature type="chain" id="PRO_0000025237" description="Outer membrane porin F">
    <location>
        <begin position="23"/>
        <end position="362"/>
    </location>
</feature>
<feature type="transmembrane region" description="Beta stranded">
    <location>
        <begin position="23"/>
        <end position="28"/>
    </location>
</feature>
<feature type="topological domain" description="Periplasmic">
    <location>
        <position position="29"/>
    </location>
</feature>
<feature type="transmembrane region" description="Beta stranded">
    <location>
        <begin position="30"/>
        <end position="45"/>
    </location>
</feature>
<feature type="topological domain" description="Extracellular">
    <location>
        <begin position="46"/>
        <end position="60"/>
    </location>
</feature>
<feature type="transmembrane region" description="Beta stranded">
    <location>
        <begin position="61"/>
        <end position="73"/>
    </location>
</feature>
<feature type="topological domain" description="Periplasmic">
    <location>
        <begin position="74"/>
        <end position="75"/>
    </location>
</feature>
<feature type="transmembrane region" description="Beta stranded">
    <location>
        <begin position="76"/>
        <end position="88"/>
    </location>
</feature>
<feature type="topological domain" description="Extracellular">
    <location>
        <begin position="89"/>
        <end position="104"/>
    </location>
</feature>
<feature type="transmembrane region" description="Beta stranded">
    <location>
        <begin position="105"/>
        <end position="113"/>
    </location>
</feature>
<feature type="topological domain" description="Periplasmic">
    <location>
        <begin position="114"/>
        <end position="115"/>
    </location>
</feature>
<feature type="transmembrane region" description="Beta stranded">
    <location>
        <begin position="116"/>
        <end position="122"/>
    </location>
</feature>
<feature type="topological domain" description="Extracellular">
    <location>
        <begin position="123"/>
        <end position="156"/>
    </location>
</feature>
<feature type="transmembrane region" description="Beta stranded">
    <location>
        <begin position="157"/>
        <end position="163"/>
    </location>
</feature>
<feature type="topological domain" description="Periplasmic">
    <location>
        <begin position="164"/>
        <end position="171"/>
    </location>
</feature>
<feature type="transmembrane region" description="Beta stranded">
    <location>
        <begin position="172"/>
        <end position="181"/>
    </location>
</feature>
<feature type="topological domain" description="Extracellular">
    <location>
        <begin position="182"/>
        <end position="193"/>
    </location>
</feature>
<feature type="transmembrane region" description="Beta stranded">
    <location>
        <begin position="194"/>
        <end position="204"/>
    </location>
</feature>
<feature type="topological domain" description="Periplasmic">
    <location>
        <position position="205"/>
    </location>
</feature>
<feature type="transmembrane region" description="Beta stranded">
    <location>
        <begin position="206"/>
        <end position="217"/>
    </location>
</feature>
<feature type="topological domain" description="Extracellular">
    <location>
        <begin position="218"/>
        <end position="232"/>
    </location>
</feature>
<feature type="transmembrane region" description="Beta stranded">
    <location>
        <begin position="233"/>
        <end position="244"/>
    </location>
</feature>
<feature type="topological domain" description="Periplasmic">
    <location>
        <position position="245"/>
    </location>
</feature>
<feature type="transmembrane region" description="Beta stranded">
    <location>
        <begin position="246"/>
        <end position="257"/>
    </location>
</feature>
<feature type="topological domain" description="Extracellular">
    <location>
        <begin position="258"/>
        <end position="274"/>
    </location>
</feature>
<feature type="transmembrane region" description="Beta stranded">
    <location>
        <begin position="275"/>
        <end position="287"/>
    </location>
</feature>
<feature type="topological domain" description="Periplasmic">
    <location>
        <begin position="288"/>
        <end position="289"/>
    </location>
</feature>
<feature type="transmembrane region" description="Beta stranded">
    <location>
        <begin position="290"/>
        <end position="303"/>
    </location>
</feature>
<feature type="topological domain" description="Extracellular">
    <location>
        <begin position="304"/>
        <end position="313"/>
    </location>
</feature>
<feature type="transmembrane region" description="Beta stranded">
    <location>
        <begin position="314"/>
        <end position="325"/>
    </location>
</feature>
<feature type="topological domain" description="Periplasmic">
    <location>
        <begin position="326"/>
        <end position="327"/>
    </location>
</feature>
<feature type="transmembrane region" description="Beta stranded">
    <location>
        <begin position="328"/>
        <end position="337"/>
    </location>
</feature>
<feature type="topological domain" description="Extracellular">
    <location>
        <begin position="338"/>
        <end position="352"/>
    </location>
</feature>
<feature type="transmembrane region" description="Beta stranded">
    <location>
        <begin position="353"/>
        <end position="362"/>
    </location>
</feature>
<feature type="sequence variant" description="In strain: B/r; AA sequence." evidence="11">
    <original>Q</original>
    <variation>E</variation>
    <location>
        <position position="88"/>
    </location>
</feature>
<feature type="sequence variant" description="In strain: B/r; AA sequence." evidence="11">
    <original>E</original>
    <variation>G</variation>
    <location>
        <position position="139"/>
    </location>
</feature>
<feature type="sequence variant" description="In strain: B/r; AA sequence." evidence="11">
    <original>Q</original>
    <variation>L</variation>
    <location>
        <position position="284"/>
    </location>
</feature>
<feature type="strand" evidence="19">
    <location>
        <begin position="24"/>
        <end position="28"/>
    </location>
</feature>
<feature type="strand" evidence="19">
    <location>
        <begin position="31"/>
        <end position="45"/>
    </location>
</feature>
<feature type="strand" evidence="18">
    <location>
        <begin position="47"/>
        <end position="50"/>
    </location>
</feature>
<feature type="strand" evidence="19">
    <location>
        <begin position="53"/>
        <end position="55"/>
    </location>
</feature>
<feature type="strand" evidence="19">
    <location>
        <begin position="57"/>
        <end position="59"/>
    </location>
</feature>
<feature type="strand" evidence="19">
    <location>
        <begin position="62"/>
        <end position="72"/>
    </location>
</feature>
<feature type="strand" evidence="19">
    <location>
        <begin position="74"/>
        <end position="91"/>
    </location>
</feature>
<feature type="turn" evidence="19">
    <location>
        <begin position="95"/>
        <end position="100"/>
    </location>
</feature>
<feature type="strand" evidence="19">
    <location>
        <begin position="102"/>
        <end position="112"/>
    </location>
</feature>
<feature type="turn" evidence="19">
    <location>
        <begin position="113"/>
        <end position="115"/>
    </location>
</feature>
<feature type="strand" evidence="19">
    <location>
        <begin position="116"/>
        <end position="124"/>
    </location>
</feature>
<feature type="helix" evidence="19">
    <location>
        <begin position="128"/>
        <end position="131"/>
    </location>
</feature>
<feature type="turn" evidence="19">
    <location>
        <begin position="132"/>
        <end position="134"/>
    </location>
</feature>
<feature type="strand" evidence="19">
    <location>
        <begin position="138"/>
        <end position="140"/>
    </location>
</feature>
<feature type="strand" evidence="20">
    <location>
        <begin position="147"/>
        <end position="149"/>
    </location>
</feature>
<feature type="strand" evidence="19">
    <location>
        <begin position="152"/>
        <end position="164"/>
    </location>
</feature>
<feature type="helix" evidence="19">
    <location>
        <begin position="165"/>
        <end position="168"/>
    </location>
</feature>
<feature type="strand" evidence="19">
    <location>
        <begin position="173"/>
        <end position="180"/>
    </location>
</feature>
<feature type="strand" evidence="19">
    <location>
        <begin position="186"/>
        <end position="188"/>
    </location>
</feature>
<feature type="strand" evidence="19">
    <location>
        <begin position="195"/>
        <end position="204"/>
    </location>
</feature>
<feature type="strand" evidence="19">
    <location>
        <begin position="207"/>
        <end position="217"/>
    </location>
</feature>
<feature type="helix" evidence="19">
    <location>
        <begin position="220"/>
        <end position="223"/>
    </location>
</feature>
<feature type="strand" evidence="19">
    <location>
        <begin position="225"/>
        <end position="227"/>
    </location>
</feature>
<feature type="strand" evidence="19">
    <location>
        <begin position="231"/>
        <end position="244"/>
    </location>
</feature>
<feature type="strand" evidence="19">
    <location>
        <begin position="247"/>
        <end position="258"/>
    </location>
</feature>
<feature type="strand" evidence="19">
    <location>
        <begin position="260"/>
        <end position="264"/>
    </location>
</feature>
<feature type="turn" evidence="19">
    <location>
        <begin position="265"/>
        <end position="268"/>
    </location>
</feature>
<feature type="strand" evidence="19">
    <location>
        <begin position="269"/>
        <end position="272"/>
    </location>
</feature>
<feature type="strand" evidence="19">
    <location>
        <begin position="274"/>
        <end position="285"/>
    </location>
</feature>
<feature type="strand" evidence="19">
    <location>
        <begin position="290"/>
        <end position="305"/>
    </location>
</feature>
<feature type="turn" evidence="19">
    <location>
        <begin position="306"/>
        <end position="308"/>
    </location>
</feature>
<feature type="strand" evidence="19">
    <location>
        <begin position="309"/>
        <end position="326"/>
    </location>
</feature>
<feature type="strand" evidence="19">
    <location>
        <begin position="329"/>
        <end position="338"/>
    </location>
</feature>
<feature type="strand" evidence="19">
    <location>
        <begin position="353"/>
        <end position="362"/>
    </location>
</feature>
<protein>
    <recommendedName>
        <fullName>Outer membrane porin F</fullName>
    </recommendedName>
    <alternativeName>
        <fullName>Outer membrane protein 1A</fullName>
    </alternativeName>
    <alternativeName>
        <fullName>Outer membrane protein B</fullName>
    </alternativeName>
    <alternativeName>
        <fullName>Outer membrane protein F</fullName>
    </alternativeName>
    <alternativeName>
        <fullName>Outer membrane protein IA</fullName>
    </alternativeName>
    <alternativeName>
        <fullName>Porin OmpF</fullName>
    </alternativeName>
</protein>
<name>OMPF_ECOLI</name>
<dbReference type="EMBL" id="J01655">
    <property type="protein sequence ID" value="AAA24244.1"/>
    <property type="molecule type" value="Genomic_DNA"/>
</dbReference>
<dbReference type="EMBL" id="U00096">
    <property type="protein sequence ID" value="AAC74015.1"/>
    <property type="molecule type" value="Genomic_DNA"/>
</dbReference>
<dbReference type="EMBL" id="AP009048">
    <property type="protein sequence ID" value="BAA35675.1"/>
    <property type="molecule type" value="Genomic_DNA"/>
</dbReference>
<dbReference type="PIR" id="A93449">
    <property type="entry name" value="MMECF"/>
</dbReference>
<dbReference type="RefSeq" id="NP_415449.1">
    <property type="nucleotide sequence ID" value="NC_000913.3"/>
</dbReference>
<dbReference type="RefSeq" id="WP_000977920.1">
    <property type="nucleotide sequence ID" value="NZ_STEB01000006.1"/>
</dbReference>
<dbReference type="PDB" id="1BT9">
    <property type="method" value="X-ray"/>
    <property type="resolution" value="3.00 A"/>
    <property type="chains" value="A=23-362"/>
</dbReference>
<dbReference type="PDB" id="1GFM">
    <property type="method" value="X-ray"/>
    <property type="resolution" value="3.50 A"/>
    <property type="chains" value="A=23-362"/>
</dbReference>
<dbReference type="PDB" id="1GFN">
    <property type="method" value="X-ray"/>
    <property type="resolution" value="3.10 A"/>
    <property type="chains" value="A=23-362"/>
</dbReference>
<dbReference type="PDB" id="1GFO">
    <property type="method" value="X-ray"/>
    <property type="resolution" value="3.30 A"/>
    <property type="chains" value="A=23-362"/>
</dbReference>
<dbReference type="PDB" id="1GFP">
    <property type="method" value="X-ray"/>
    <property type="resolution" value="2.70 A"/>
    <property type="chains" value="A=23-362"/>
</dbReference>
<dbReference type="PDB" id="1GFQ">
    <property type="method" value="X-ray"/>
    <property type="resolution" value="2.80 A"/>
    <property type="chains" value="A=23-362"/>
</dbReference>
<dbReference type="PDB" id="1HXT">
    <property type="method" value="X-ray"/>
    <property type="resolution" value="2.40 A"/>
    <property type="chains" value="A=23-362"/>
</dbReference>
<dbReference type="PDB" id="1HXU">
    <property type="method" value="X-ray"/>
    <property type="resolution" value="3.00 A"/>
    <property type="chains" value="A=23-362"/>
</dbReference>
<dbReference type="PDB" id="1HXX">
    <property type="method" value="X-ray"/>
    <property type="resolution" value="2.20 A"/>
    <property type="chains" value="A=23-362"/>
</dbReference>
<dbReference type="PDB" id="1MPF">
    <property type="method" value="X-ray"/>
    <property type="resolution" value="3.00 A"/>
    <property type="chains" value="A=23-362"/>
</dbReference>
<dbReference type="PDB" id="1OPF">
    <property type="method" value="X-ray"/>
    <property type="resolution" value="3.20 A"/>
    <property type="chains" value="A/B/C/D/E/F=23-362"/>
</dbReference>
<dbReference type="PDB" id="2OMF">
    <property type="method" value="X-ray"/>
    <property type="resolution" value="2.40 A"/>
    <property type="chains" value="A=23-362"/>
</dbReference>
<dbReference type="PDB" id="2ZFG">
    <property type="method" value="X-ray"/>
    <property type="resolution" value="1.59 A"/>
    <property type="chains" value="A=23-362"/>
</dbReference>
<dbReference type="PDB" id="2ZLD">
    <property type="method" value="X-ray"/>
    <property type="resolution" value="3.00 A"/>
    <property type="chains" value="A/B=23-362"/>
</dbReference>
<dbReference type="PDB" id="3FYX">
    <property type="method" value="X-ray"/>
    <property type="resolution" value="3.40 A"/>
    <property type="chains" value="A=23-362"/>
</dbReference>
<dbReference type="PDB" id="3HW9">
    <property type="method" value="X-ray"/>
    <property type="resolution" value="2.61 A"/>
    <property type="chains" value="A/B=1-362"/>
</dbReference>
<dbReference type="PDB" id="3HWB">
    <property type="method" value="X-ray"/>
    <property type="resolution" value="3.00 A"/>
    <property type="chains" value="A/B=1-362"/>
</dbReference>
<dbReference type="PDB" id="3K19">
    <property type="method" value="X-ray"/>
    <property type="resolution" value="3.79 A"/>
    <property type="chains" value="A/B/C/D/E/F/G/H/I/J/K/L=23-362"/>
</dbReference>
<dbReference type="PDB" id="3K1B">
    <property type="method" value="X-ray"/>
    <property type="resolution" value="4.39 A"/>
    <property type="chains" value="A/B/C/D=23-362"/>
</dbReference>
<dbReference type="PDB" id="3O0E">
    <property type="method" value="X-ray"/>
    <property type="resolution" value="3.01 A"/>
    <property type="chains" value="A/B/C/D/E/F=23-362"/>
</dbReference>
<dbReference type="PDB" id="3POQ">
    <property type="method" value="X-ray"/>
    <property type="resolution" value="1.90 A"/>
    <property type="chains" value="A=23-362"/>
</dbReference>
<dbReference type="PDB" id="3POU">
    <property type="method" value="X-ray"/>
    <property type="resolution" value="2.80 A"/>
    <property type="chains" value="A=23-362"/>
</dbReference>
<dbReference type="PDB" id="3POX">
    <property type="method" value="X-ray"/>
    <property type="resolution" value="2.00 A"/>
    <property type="chains" value="A/B/C/D/E/F=23-362"/>
</dbReference>
<dbReference type="PDB" id="4D5U">
    <property type="method" value="X-ray"/>
    <property type="resolution" value="3.50 A"/>
    <property type="chains" value="A/B/C/D/E/F=23-362"/>
</dbReference>
<dbReference type="PDB" id="4GCP">
    <property type="method" value="X-ray"/>
    <property type="resolution" value="1.98 A"/>
    <property type="chains" value="A/B=23-362"/>
</dbReference>
<dbReference type="PDB" id="4GCQ">
    <property type="method" value="X-ray"/>
    <property type="resolution" value="2.20 A"/>
    <property type="chains" value="A/B=23-362"/>
</dbReference>
<dbReference type="PDB" id="4GCS">
    <property type="method" value="X-ray"/>
    <property type="resolution" value="1.87 A"/>
    <property type="chains" value="A/B=23-362"/>
</dbReference>
<dbReference type="PDB" id="4JFB">
    <property type="method" value="X-ray"/>
    <property type="resolution" value="3.80 A"/>
    <property type="chains" value="A/B/C/D/E/F=23-362"/>
</dbReference>
<dbReference type="PDB" id="4LSE">
    <property type="method" value="X-ray"/>
    <property type="resolution" value="2.10 A"/>
    <property type="chains" value="A/B/C=23-362"/>
</dbReference>
<dbReference type="PDB" id="4LSF">
    <property type="method" value="X-ray"/>
    <property type="resolution" value="1.90 A"/>
    <property type="chains" value="A/B=23-362"/>
</dbReference>
<dbReference type="PDB" id="4LSH">
    <property type="method" value="X-ray"/>
    <property type="resolution" value="2.20 A"/>
    <property type="chains" value="A/B=23-362"/>
</dbReference>
<dbReference type="PDB" id="4LSI">
    <property type="method" value="X-ray"/>
    <property type="resolution" value="2.09 A"/>
    <property type="chains" value="A/B/C=23-362"/>
</dbReference>
<dbReference type="PDB" id="5NUO">
    <property type="method" value="X-ray"/>
    <property type="resolution" value="3.20 A"/>
    <property type="chains" value="A/C/E=23-362"/>
</dbReference>
<dbReference type="PDB" id="5NUQ">
    <property type="method" value="X-ray"/>
    <property type="resolution" value="3.20 A"/>
    <property type="chains" value="A/B/C/D/E/F=23-362"/>
</dbReference>
<dbReference type="PDB" id="5NUR">
    <property type="method" value="X-ray"/>
    <property type="resolution" value="3.29 A"/>
    <property type="chains" value="A/C/E=23-362"/>
</dbReference>
<dbReference type="PDB" id="6WTZ">
    <property type="method" value="EM"/>
    <property type="resolution" value="3.15 A"/>
    <property type="chains" value="A/B/C=1-362"/>
</dbReference>
<dbReference type="PDB" id="6ZHP">
    <property type="method" value="X-ray"/>
    <property type="resolution" value="2.05 A"/>
    <property type="chains" value="B=1-362"/>
</dbReference>
<dbReference type="PDB" id="6ZHV">
    <property type="method" value="X-ray"/>
    <property type="resolution" value="1.95 A"/>
    <property type="chains" value="A/B/C=1-362"/>
</dbReference>
<dbReference type="PDB" id="7FDY">
    <property type="method" value="X-ray"/>
    <property type="resolution" value="3.10 A"/>
    <property type="chains" value="A/B/C=23-362"/>
</dbReference>
<dbReference type="PDB" id="7NST">
    <property type="method" value="EM"/>
    <property type="resolution" value="3.70 A"/>
    <property type="chains" value="A/B/C=23-362"/>
</dbReference>
<dbReference type="PDB" id="7NSU">
    <property type="method" value="EM"/>
    <property type="resolution" value="4.70 A"/>
    <property type="chains" value="A/B/C=23-362"/>
</dbReference>
<dbReference type="PDB" id="8C7L">
    <property type="method" value="X-ray"/>
    <property type="resolution" value="3.52 A"/>
    <property type="chains" value="A/B/C/D/E/F=1-362"/>
</dbReference>
<dbReference type="PDBsum" id="1BT9"/>
<dbReference type="PDBsum" id="1GFM"/>
<dbReference type="PDBsum" id="1GFN"/>
<dbReference type="PDBsum" id="1GFO"/>
<dbReference type="PDBsum" id="1GFP"/>
<dbReference type="PDBsum" id="1GFQ"/>
<dbReference type="PDBsum" id="1HXT"/>
<dbReference type="PDBsum" id="1HXU"/>
<dbReference type="PDBsum" id="1HXX"/>
<dbReference type="PDBsum" id="1MPF"/>
<dbReference type="PDBsum" id="1OPF"/>
<dbReference type="PDBsum" id="2OMF"/>
<dbReference type="PDBsum" id="2ZFG"/>
<dbReference type="PDBsum" id="2ZLD"/>
<dbReference type="PDBsum" id="3FYX"/>
<dbReference type="PDBsum" id="3HW9"/>
<dbReference type="PDBsum" id="3HWB"/>
<dbReference type="PDBsum" id="3K19"/>
<dbReference type="PDBsum" id="3K1B"/>
<dbReference type="PDBsum" id="3O0E"/>
<dbReference type="PDBsum" id="3POQ"/>
<dbReference type="PDBsum" id="3POU"/>
<dbReference type="PDBsum" id="3POX"/>
<dbReference type="PDBsum" id="4D5U"/>
<dbReference type="PDBsum" id="4GCP"/>
<dbReference type="PDBsum" id="4GCQ"/>
<dbReference type="PDBsum" id="4GCS"/>
<dbReference type="PDBsum" id="4JFB"/>
<dbReference type="PDBsum" id="4LSE"/>
<dbReference type="PDBsum" id="4LSF"/>
<dbReference type="PDBsum" id="4LSH"/>
<dbReference type="PDBsum" id="4LSI"/>
<dbReference type="PDBsum" id="5NUO"/>
<dbReference type="PDBsum" id="5NUQ"/>
<dbReference type="PDBsum" id="5NUR"/>
<dbReference type="PDBsum" id="6WTZ"/>
<dbReference type="PDBsum" id="6ZHP"/>
<dbReference type="PDBsum" id="6ZHV"/>
<dbReference type="PDBsum" id="7FDY"/>
<dbReference type="PDBsum" id="7NST"/>
<dbReference type="PDBsum" id="7NSU"/>
<dbReference type="PDBsum" id="8C7L"/>
<dbReference type="EMDB" id="EMD-12576"/>
<dbReference type="EMDB" id="EMD-12577"/>
<dbReference type="EMDB" id="EMD-21900"/>
<dbReference type="SMR" id="P02931"/>
<dbReference type="BioGRID" id="4260018">
    <property type="interactions" value="306"/>
</dbReference>
<dbReference type="BioGRID" id="849928">
    <property type="interactions" value="1"/>
</dbReference>
<dbReference type="DIP" id="DIP-10398N"/>
<dbReference type="FunCoup" id="P02931">
    <property type="interactions" value="264"/>
</dbReference>
<dbReference type="IntAct" id="P02931">
    <property type="interactions" value="9"/>
</dbReference>
<dbReference type="MINT" id="P02931"/>
<dbReference type="STRING" id="511145.b0929"/>
<dbReference type="DrugBank" id="DB04233">
    <property type="generic name" value="(Hydroxyethyloxy)Tri(Ethyloxy)Octane"/>
</dbReference>
<dbReference type="DrugBank" id="DB13092">
    <property type="generic name" value="Meclocycline"/>
</dbReference>
<dbReference type="DrugBank" id="DB01017">
    <property type="generic name" value="Minocycline"/>
</dbReference>
<dbReference type="DrugBank" id="DB07084">
    <property type="generic name" value="N-(6,7,9,10,17,18,20,21-octahydrodibenzo[b,k][1,4,7,10,13,16]hexaoxacyclooctadecin-2-yl)acetamide"/>
</dbReference>
<dbReference type="TCDB" id="1.B.1.1.1">
    <property type="family name" value="the general bacterial porin (gbp) family"/>
</dbReference>
<dbReference type="jPOST" id="P02931"/>
<dbReference type="PaxDb" id="511145-b0929"/>
<dbReference type="EnsemblBacteria" id="AAC74015">
    <property type="protein sequence ID" value="AAC74015"/>
    <property type="gene ID" value="b0929"/>
</dbReference>
<dbReference type="GeneID" id="75204020"/>
<dbReference type="GeneID" id="945554"/>
<dbReference type="KEGG" id="ecj:JW0912"/>
<dbReference type="KEGG" id="eco:b0929"/>
<dbReference type="KEGG" id="ecoc:C3026_05710"/>
<dbReference type="PATRIC" id="fig|1411691.4.peg.1347"/>
<dbReference type="EchoBASE" id="EB0665"/>
<dbReference type="eggNOG" id="COG3203">
    <property type="taxonomic scope" value="Bacteria"/>
</dbReference>
<dbReference type="HOGENOM" id="CLU_058202_0_0_6"/>
<dbReference type="InParanoid" id="P02931"/>
<dbReference type="OMA" id="FMNGRST"/>
<dbReference type="OrthoDB" id="7055111at2"/>
<dbReference type="PhylomeDB" id="P02931"/>
<dbReference type="BioCyc" id="EcoCyc:EG10671-MONOMER"/>
<dbReference type="BioCyc" id="MetaCyc:EG10671-MONOMER"/>
<dbReference type="EvolutionaryTrace" id="P02931"/>
<dbReference type="PHI-base" id="PHI:7023"/>
<dbReference type="PRO" id="PR:P02931"/>
<dbReference type="Proteomes" id="UP000000625">
    <property type="component" value="Chromosome"/>
</dbReference>
<dbReference type="GO" id="GO:0009279">
    <property type="term" value="C:cell outer membrane"/>
    <property type="evidence" value="ECO:0000314"/>
    <property type="project" value="EcoCyc"/>
</dbReference>
<dbReference type="GO" id="GO:0016020">
    <property type="term" value="C:membrane"/>
    <property type="evidence" value="ECO:0000314"/>
    <property type="project" value="CAFA"/>
</dbReference>
<dbReference type="GO" id="GO:0034702">
    <property type="term" value="C:monoatomic ion channel complex"/>
    <property type="evidence" value="ECO:0000314"/>
    <property type="project" value="CAFA"/>
</dbReference>
<dbReference type="GO" id="GO:0046930">
    <property type="term" value="C:pore complex"/>
    <property type="evidence" value="ECO:0000314"/>
    <property type="project" value="EcoCyc"/>
</dbReference>
<dbReference type="GO" id="GO:0042912">
    <property type="term" value="F:colicin transmembrane transporter activity"/>
    <property type="evidence" value="ECO:0000315"/>
    <property type="project" value="EcoCyc"/>
</dbReference>
<dbReference type="GO" id="GO:0097718">
    <property type="term" value="F:disordered domain specific binding"/>
    <property type="evidence" value="ECO:0000353"/>
    <property type="project" value="CAFA"/>
</dbReference>
<dbReference type="GO" id="GO:0042802">
    <property type="term" value="F:identical protein binding"/>
    <property type="evidence" value="ECO:0000314"/>
    <property type="project" value="CAFA"/>
</dbReference>
<dbReference type="GO" id="GO:0008289">
    <property type="term" value="F:lipid binding"/>
    <property type="evidence" value="ECO:0000314"/>
    <property type="project" value="EcoCyc"/>
</dbReference>
<dbReference type="GO" id="GO:0001530">
    <property type="term" value="F:lipopolysaccharide binding"/>
    <property type="evidence" value="ECO:0000314"/>
    <property type="project" value="EcoCyc"/>
</dbReference>
<dbReference type="GO" id="GO:0005216">
    <property type="term" value="F:monoatomic ion channel activity"/>
    <property type="evidence" value="ECO:0000314"/>
    <property type="project" value="CAFA"/>
</dbReference>
<dbReference type="GO" id="GO:0015288">
    <property type="term" value="F:porin activity"/>
    <property type="evidence" value="ECO:0000315"/>
    <property type="project" value="EcoliWiki"/>
</dbReference>
<dbReference type="GO" id="GO:0034220">
    <property type="term" value="P:monoatomic ion transmembrane transport"/>
    <property type="evidence" value="ECO:0000314"/>
    <property type="project" value="CAFA"/>
</dbReference>
<dbReference type="GO" id="GO:0070207">
    <property type="term" value="P:protein homotrimerization"/>
    <property type="evidence" value="ECO:0000314"/>
    <property type="project" value="EcoCyc"/>
</dbReference>
<dbReference type="GO" id="GO:0015031">
    <property type="term" value="P:protein transport"/>
    <property type="evidence" value="ECO:0007669"/>
    <property type="project" value="UniProtKB-KW"/>
</dbReference>
<dbReference type="CDD" id="cd00342">
    <property type="entry name" value="gram_neg_porins"/>
    <property type="match status" value="1"/>
</dbReference>
<dbReference type="FunFam" id="2.40.160.10:FF:000002">
    <property type="entry name" value="Outer membrane porin F"/>
    <property type="match status" value="1"/>
</dbReference>
<dbReference type="Gene3D" id="2.40.160.10">
    <property type="entry name" value="Porin"/>
    <property type="match status" value="1"/>
</dbReference>
<dbReference type="InterPro" id="IPR050298">
    <property type="entry name" value="Gram-neg_bact_OMP"/>
</dbReference>
<dbReference type="InterPro" id="IPR033900">
    <property type="entry name" value="Gram_neg_porin_domain"/>
</dbReference>
<dbReference type="InterPro" id="IPR023614">
    <property type="entry name" value="Porin_dom_sf"/>
</dbReference>
<dbReference type="InterPro" id="IPR001897">
    <property type="entry name" value="Porin_gammaproteobac"/>
</dbReference>
<dbReference type="InterPro" id="IPR001702">
    <property type="entry name" value="Porin_Gram-ve"/>
</dbReference>
<dbReference type="InterPro" id="IPR013793">
    <property type="entry name" value="Porin_Gram-ve_CS"/>
</dbReference>
<dbReference type="NCBIfam" id="NF007446">
    <property type="entry name" value="PRK10002.1"/>
    <property type="match status" value="1"/>
</dbReference>
<dbReference type="PANTHER" id="PTHR34501:SF2">
    <property type="entry name" value="OUTER MEMBRANE PORIN F-RELATED"/>
    <property type="match status" value="1"/>
</dbReference>
<dbReference type="PANTHER" id="PTHR34501">
    <property type="entry name" value="PROTEIN YDDL-RELATED"/>
    <property type="match status" value="1"/>
</dbReference>
<dbReference type="Pfam" id="PF00267">
    <property type="entry name" value="Porin_1"/>
    <property type="match status" value="1"/>
</dbReference>
<dbReference type="PRINTS" id="PR00183">
    <property type="entry name" value="ECOLIPORIN"/>
</dbReference>
<dbReference type="PRINTS" id="PR00182">
    <property type="entry name" value="ECOLNEIPORIN"/>
</dbReference>
<dbReference type="SUPFAM" id="SSF56935">
    <property type="entry name" value="Porins"/>
    <property type="match status" value="1"/>
</dbReference>
<dbReference type="PROSITE" id="PS00576">
    <property type="entry name" value="GRAM_NEG_PORIN"/>
    <property type="match status" value="1"/>
</dbReference>
<evidence type="ECO:0000269" key="1">
    <source>
    </source>
</evidence>
<evidence type="ECO:0000269" key="2">
    <source>
    </source>
</evidence>
<evidence type="ECO:0000269" key="3">
    <source>
    </source>
</evidence>
<evidence type="ECO:0000269" key="4">
    <source>
    </source>
</evidence>
<evidence type="ECO:0000269" key="5">
    <source>
    </source>
</evidence>
<evidence type="ECO:0000269" key="6">
    <source>
    </source>
</evidence>
<evidence type="ECO:0000269" key="7">
    <source>
    </source>
</evidence>
<evidence type="ECO:0000269" key="8">
    <source>
    </source>
</evidence>
<evidence type="ECO:0000269" key="9">
    <source>
    </source>
</evidence>
<evidence type="ECO:0000269" key="10">
    <source>
    </source>
</evidence>
<evidence type="ECO:0000305" key="11"/>
<evidence type="ECO:0000305" key="12">
    <source>
    </source>
</evidence>
<evidence type="ECO:0000305" key="13">
    <source>
    </source>
</evidence>
<evidence type="ECO:0007744" key="14">
    <source>
        <dbReference type="PDB" id="1BT9"/>
    </source>
</evidence>
<evidence type="ECO:0007744" key="15">
    <source>
        <dbReference type="PDB" id="1MPF"/>
    </source>
</evidence>
<evidence type="ECO:0007744" key="16">
    <source>
        <dbReference type="PDB" id="2ZFG"/>
    </source>
</evidence>
<evidence type="ECO:0007744" key="17">
    <source>
        <dbReference type="PDB" id="2ZLD"/>
    </source>
</evidence>
<evidence type="ECO:0007829" key="18">
    <source>
        <dbReference type="PDB" id="1HXX"/>
    </source>
</evidence>
<evidence type="ECO:0007829" key="19">
    <source>
        <dbReference type="PDB" id="2ZFG"/>
    </source>
</evidence>
<evidence type="ECO:0007829" key="20">
    <source>
        <dbReference type="PDB" id="4LSI"/>
    </source>
</evidence>
<comment type="function">
    <text evidence="12">Forms pores that allow passive diffusion of small molecules across the outer membrane.</text>
</comment>
<comment type="function">
    <text evidence="13">(Microbial infection) It is also a receptor for the bacteriophage T2. Is the major receptor for colicin E5 (Probable).</text>
</comment>
<comment type="function">
    <text evidence="2">(Microbial infection) Probably translocates colicin E3 (and other A-type colicins) across the outer membrane (PubMed:18636093).</text>
</comment>
<comment type="function">
    <text evidence="5">(Microbial infection) A mixed OmpC-OmpF heterotrimer is the outer membrane receptor for toxin CdiA-EC536 (ECL_04451); polymorphisms in extracellular loops 4 and 5 of OmpC confer susceptibility to CdiA-EC536-mediated toxicity.</text>
</comment>
<comment type="subunit">
    <text evidence="1 2 4 10">Homotrimer (PubMed:16079137, PubMed:18636093, PubMed:2464593, PubMed:9843370). Forms mixed heterotrimers with OmpC and with PhoE; other mixed heterotrimers are also probable (PubMed:2464593).</text>
</comment>
<comment type="subunit">
    <text evidence="2">(Microbial infection) Trimeric complexes with colicin E3, BtuB and OmpF can be cross-linked and immunoprecipitated (PubMed:18636093).</text>
</comment>
<comment type="interaction">
    <interactant intactId="EBI-371336">
        <id>P02931</id>
    </interactant>
    <interactant intactId="EBI-1128511">
        <id>P76506</id>
        <label>mlaA</label>
    </interactant>
    <organismsDiffer>false</organismsDiffer>
    <experiments>4</experiments>
</comment>
<comment type="interaction">
    <interactant intactId="EBI-371336">
        <id>P02931</id>
    </interactant>
    <interactant intactId="EBI-371336">
        <id>P02931</id>
        <label>ompF</label>
    </interactant>
    <organismsDiffer>false</organismsDiffer>
    <experiments>7</experiments>
</comment>
<comment type="interaction">
    <interactant intactId="EBI-371336">
        <id>P02931</id>
    </interactant>
    <interactant intactId="EBI-15691934">
        <id>P08083</id>
        <label>cna</label>
    </interactant>
    <organismsDiffer>true</organismsDiffer>
    <experiments>3</experiments>
</comment>
<comment type="interaction">
    <interactant intactId="EBI-371336">
        <id>P02931</id>
    </interactant>
    <interactant intactId="EBI-1029888">
        <id>P09883</id>
        <label>col</label>
    </interactant>
    <organismsDiffer>true</organismsDiffer>
    <experiments>4</experiments>
</comment>
<comment type="subcellular location">
    <subcellularLocation>
        <location evidence="1 4">Cell outer membrane</location>
        <topology evidence="1">Multi-pass membrane protein</topology>
    </subcellularLocation>
</comment>
<comment type="induction">
    <text evidence="3 4 6">By growth in low osmolarity conditions (low sugar or salt); activated at low osmolarity by OmpR, repressed at high osmolarity by OmpR (at protein level) (PubMed:2464593, PubMed:3010044). Levels of OmpF protein decrease in a lon/ycgE double disruption (at protein level) (PubMed:19721064).</text>
</comment>
<comment type="domain">
    <text evidence="2">Each subunit of the trimer has a water-filled pore with a narrow, elliptically shaped (7 X 11 Angstroms) selectivity filter which has a solvent accessible area of 30-40 Angstroms(2) (PubMed:18636093).</text>
</comment>
<comment type="disruption phenotype">
    <text evidence="3 5">Leads to decreased susceptibility to a number of hydrophilic antibiotics including ampicillin, cefoxitin and tetracycline (PubMed:19721064). Deletion of ompF confers resistance to colicin E5 (PubMed:27723824).</text>
</comment>
<comment type="similarity">
    <text evidence="11">Belongs to the Gram-negative porin family.</text>
</comment>
<reference key="1">
    <citation type="journal article" date="1982" name="Nucleic Acids Res.">
        <title>Primary structure of the ompF gene that codes for a major outer membrane protein of Escherichia coli K-12.</title>
        <authorList>
            <person name="Inokuchi K."/>
            <person name="Mutoh N."/>
            <person name="Matsuyama S."/>
            <person name="Mizushima S."/>
        </authorList>
    </citation>
    <scope>NUCLEOTIDE SEQUENCE [GENOMIC DNA]</scope>
    <source>
        <strain>K12</strain>
    </source>
</reference>
<reference key="2">
    <citation type="journal article" date="1996" name="DNA Res.">
        <title>A 718-kb DNA sequence of the Escherichia coli K-12 genome corresponding to the 12.7-28.0 min region on the linkage map.</title>
        <authorList>
            <person name="Oshima T."/>
            <person name="Aiba H."/>
            <person name="Baba T."/>
            <person name="Fujita K."/>
            <person name="Hayashi K."/>
            <person name="Honjo A."/>
            <person name="Ikemoto K."/>
            <person name="Inada T."/>
            <person name="Itoh T."/>
            <person name="Kajihara M."/>
            <person name="Kanai K."/>
            <person name="Kashimoto K."/>
            <person name="Kimura S."/>
            <person name="Kitagawa M."/>
            <person name="Makino K."/>
            <person name="Masuda S."/>
            <person name="Miki T."/>
            <person name="Mizobuchi K."/>
            <person name="Mori H."/>
            <person name="Motomura K."/>
            <person name="Nakamura Y."/>
            <person name="Nashimoto H."/>
            <person name="Nishio Y."/>
            <person name="Saito N."/>
            <person name="Sampei G."/>
            <person name="Seki Y."/>
            <person name="Tagami H."/>
            <person name="Takemoto K."/>
            <person name="Wada C."/>
            <person name="Yamamoto Y."/>
            <person name="Yano M."/>
            <person name="Horiuchi T."/>
        </authorList>
    </citation>
    <scope>NUCLEOTIDE SEQUENCE [LARGE SCALE GENOMIC DNA]</scope>
    <source>
        <strain>K12 / W3110 / ATCC 27325 / DSM 5911</strain>
    </source>
</reference>
<reference key="3">
    <citation type="journal article" date="1997" name="Science">
        <title>The complete genome sequence of Escherichia coli K-12.</title>
        <authorList>
            <person name="Blattner F.R."/>
            <person name="Plunkett G. III"/>
            <person name="Bloch C.A."/>
            <person name="Perna N.T."/>
            <person name="Burland V."/>
            <person name="Riley M."/>
            <person name="Collado-Vides J."/>
            <person name="Glasner J.D."/>
            <person name="Rode C.K."/>
            <person name="Mayhew G.F."/>
            <person name="Gregor J."/>
            <person name="Davis N.W."/>
            <person name="Kirkpatrick H.A."/>
            <person name="Goeden M.A."/>
            <person name="Rose D.J."/>
            <person name="Mau B."/>
            <person name="Shao Y."/>
        </authorList>
    </citation>
    <scope>NUCLEOTIDE SEQUENCE [LARGE SCALE GENOMIC DNA]</scope>
    <source>
        <strain>K12 / MG1655 / ATCC 47076</strain>
    </source>
</reference>
<reference key="4">
    <citation type="journal article" date="2006" name="Mol. Syst. Biol.">
        <title>Highly accurate genome sequences of Escherichia coli K-12 strains MG1655 and W3110.</title>
        <authorList>
            <person name="Hayashi K."/>
            <person name="Morooka N."/>
            <person name="Yamamoto Y."/>
            <person name="Fujita K."/>
            <person name="Isono K."/>
            <person name="Choi S."/>
            <person name="Ohtsubo E."/>
            <person name="Baba T."/>
            <person name="Wanner B.L."/>
            <person name="Mori H."/>
            <person name="Horiuchi T."/>
        </authorList>
    </citation>
    <scope>NUCLEOTIDE SEQUENCE [LARGE SCALE GENOMIC DNA]</scope>
    <source>
        <strain>K12 / W3110 / ATCC 27325 / DSM 5911</strain>
    </source>
</reference>
<reference key="5">
    <citation type="journal article" date="1982" name="FEBS Lett.">
        <title>Amino acid sequence of the signal peptide of OmpF, a major outer membrane protein of Escherichia coli.</title>
        <authorList>
            <person name="Mutoh N."/>
            <person name="Inokuchi K."/>
            <person name="Mizushima S."/>
        </authorList>
    </citation>
    <scope>NUCLEOTIDE SEQUENCE [GENOMIC DNA] OF 1-37</scope>
    <source>
        <strain>K12</strain>
    </source>
</reference>
<reference key="6">
    <citation type="journal article" date="1982" name="Biochem. J.">
        <title>Primary structure of major outer-membrane protein I (ompF protein, porin) of Escherichia coli B/r.</title>
        <authorList>
            <person name="Chen R."/>
            <person name="Kramer C."/>
            <person name="Schmidmayr W."/>
            <person name="Chen-Schmeisser U."/>
            <person name="Henning U."/>
        </authorList>
    </citation>
    <scope>PROTEIN SEQUENCE OF 23-362</scope>
    <source>
        <strain>B/r</strain>
    </source>
</reference>
<reference key="7">
    <citation type="journal article" date="1985" name="J. Bacteriol.">
        <title>Construction of a series of ompF-ompC chimeric genes by in vivo homologous recombination in Escherichia coli and characterization of the translational products.</title>
        <authorList>
            <person name="Nogami T."/>
            <person name="Mizuno T."/>
            <person name="Mizushima S."/>
        </authorList>
    </citation>
    <scope>NUCLEOTIDE SEQUENCE [GENOMIC DNA] OF 33-63</scope>
</reference>
<reference key="8">
    <citation type="journal article" date="1997" name="Electrophoresis">
        <title>Comparing the predicted and observed properties of proteins encoded in the genome of Escherichia coli K-12.</title>
        <authorList>
            <person name="Link A.J."/>
            <person name="Robison K."/>
            <person name="Church G.M."/>
        </authorList>
    </citation>
    <scope>PROTEIN SEQUENCE OF 23-34 AND 39-47</scope>
    <source>
        <strain>K12 / EMG2</strain>
    </source>
</reference>
<reference key="9">
    <citation type="journal article" date="1998" name="Electrophoresis">
        <title>Extraction of membrane proteins by differential solubilization for separation using two-dimensional gel electrophoresis.</title>
        <authorList>
            <person name="Molloy M.P."/>
            <person name="Herbert B.R."/>
            <person name="Walsh B.J."/>
            <person name="Tyler M.I."/>
            <person name="Traini M."/>
            <person name="Sanchez J.-C."/>
            <person name="Hochstrasser D.F."/>
            <person name="Williams K.L."/>
            <person name="Gooley A.A."/>
        </authorList>
    </citation>
    <scope>PROTEIN SEQUENCE OF 23-27</scope>
    <source>
        <strain>K12 / W3110 / ATCC 27325 / DSM 5911</strain>
    </source>
</reference>
<reference key="10">
    <citation type="journal article" date="1986" name="Mol. Gen. Genet.">
        <title>Molecular analysis of mutant ompR genes exhibiting different phenotypes as to osmoregulation of the ompF and ompC genes of Escherichia coli.</title>
        <authorList>
            <person name="Nara F."/>
            <person name="Matsuyama S."/>
            <person name="Mizuno T."/>
            <person name="Mizushima S."/>
        </authorList>
    </citation>
    <scope>INDUCTION BY LOW OSMOLARITY</scope>
    <source>
        <strain>K12</strain>
    </source>
</reference>
<reference key="11">
    <citation type="journal article" date="1989" name="J. Biol. Chem.">
        <title>Existence and purification of porin heterotrimers of Escherichia coli K12 OmpC, OmpF, and PhoE proteins.</title>
        <authorList>
            <person name="Gehring K.B."/>
            <person name="Nikaido H."/>
        </authorList>
    </citation>
    <scope>SUBUNIT</scope>
    <scope>SUBCELLULAR LOCATION</scope>
    <scope>INDUCTION BY LOW OSMOLARITY</scope>
    <source>
        <strain>K12 / JF568</strain>
    </source>
</reference>
<reference key="12">
    <citation type="journal article" date="1997" name="Electrophoresis">
        <title>Escherichia coli proteome analysis using the gene-protein database.</title>
        <authorList>
            <person name="VanBogelen R.A."/>
            <person name="Abshire K.Z."/>
            <person name="Moldover B."/>
            <person name="Olson E.R."/>
            <person name="Neidhardt F.C."/>
        </authorList>
    </citation>
    <scope>IDENTIFICATION BY 2D-GEL</scope>
</reference>
<reference key="13">
    <citation type="journal article" date="2005" name="J. Biol. Chem.">
        <title>Protein complexes of the Escherichia coli cell envelope.</title>
        <authorList>
            <person name="Stenberg F."/>
            <person name="Chovanec P."/>
            <person name="Maslen S.L."/>
            <person name="Robinson C.V."/>
            <person name="Ilag L."/>
            <person name="von Heijne G."/>
            <person name="Daley D.O."/>
        </authorList>
    </citation>
    <scope>SUBUNIT</scope>
    <scope>SUBCELLULAR LOCATION</scope>
    <source>
        <strain>BL21-DE3</strain>
    </source>
</reference>
<reference key="14">
    <citation type="journal article" date="2009" name="Antimicrob. Agents Chemother.">
        <title>Combined inactivation of lon and ycgE decreases multidrug susceptibility by reducing the amount of OmpF porin in Escherichia coli.</title>
        <authorList>
            <person name="Duval V."/>
            <person name="Nicoloff H."/>
            <person name="Levy S.B."/>
        </authorList>
    </citation>
    <scope>ROLE IN ANTIBIOTIC SUSCEPTIBILITY</scope>
    <scope>INDUCTION</scope>
    <scope>REGULATION BY LON/YCGE</scope>
    <scope>DISRUPTION PHENOTYPE</scope>
    <source>
        <strain>K12 / AG100</strain>
    </source>
</reference>
<reference key="15">
    <citation type="journal article" date="2016" name="PLoS Pathog.">
        <title>CdiA effectors from uropathogenic Escherichia coli use heterotrimeric osmoporins as receptors to recognize target bacteria.</title>
        <authorList>
            <person name="Beck C.M."/>
            <person name="Willett J.L."/>
            <person name="Cunningham D.A."/>
            <person name="Kim J.J."/>
            <person name="Low D.A."/>
            <person name="Hayes C.S."/>
        </authorList>
    </citation>
    <scope>FUNCTION (MICROBIAL INFECTION)</scope>
    <scope>DISRUPTION PHENOTYPE</scope>
    <source>
        <strain>K12</strain>
    </source>
</reference>
<reference key="16">
    <citation type="journal article" date="1992" name="Nature">
        <title>Crystal structures explain functional properties of two E. coli porins.</title>
        <authorList>
            <person name="Cowan S.W."/>
            <person name="Schirmer T."/>
            <person name="Rummel G."/>
            <person name="Steiert M."/>
            <person name="Ghosh R."/>
            <person name="Pauptit R.A."/>
            <person name="Jansonius J.N."/>
            <person name="Rosenbusch J.P."/>
        </authorList>
    </citation>
    <scope>X-RAY CRYSTALLOGRAPHY (2.4 ANGSTROMS)</scope>
</reference>
<reference evidence="15" key="17">
    <citation type="journal article" date="1994" name="Proc. Natl. Acad. Sci. U.S.A.">
        <title>Structural and functional alterations of a colicin-resistant mutant of OmpF porin from Escherichia coli.</title>
        <authorList>
            <person name="Jeanteur D."/>
            <person name="Schirmer T."/>
            <person name="Fourel D."/>
            <person name="Simonet V."/>
            <person name="Rummel G."/>
            <person name="Widmer C."/>
            <person name="Rosenbusch J.P."/>
            <person name="Pattus F."/>
            <person name="Pages J.-M."/>
        </authorList>
    </citation>
    <scope>X-RAY CRYSTALLOGRAPHY (3.0 ANGSTROMS) OF 23-362 OF MUTANT ASP-141</scope>
</reference>
<reference evidence="14" key="18">
    <citation type="journal article" date="1998" name="Biochemistry">
        <title>Stability of trimeric OmpF porin: the contributions of the latching loop L2.</title>
        <authorList>
            <person name="Phale P.S."/>
            <person name="Philippsen A."/>
            <person name="Kiefhaber T."/>
            <person name="Koebnik R."/>
            <person name="Phale V.P."/>
            <person name="Schirmer T."/>
            <person name="Rosenbusch J.P."/>
        </authorList>
    </citation>
    <scope>X-RAY CRYSTALLOGRAPHY (3.0 ANGSTROMS)</scope>
    <scope>SUBUNIT</scope>
</reference>
<reference evidence="16 17" key="19">
    <citation type="journal article" date="2008" name="EMBO J.">
        <title>Crystal structures of the OmpF porin: function in a colicin translocon.</title>
        <authorList>
            <person name="Yamashita E."/>
            <person name="Zhalnina M.V."/>
            <person name="Zakharov S.D."/>
            <person name="Sharma O."/>
            <person name="Cramer W.A."/>
        </authorList>
    </citation>
    <scope>X-RAY CRYSTALLOGRAPHY (1.59 ANGSTROMS) OF 23-362</scope>
    <scope>FUNCTION (MICROBIAL INFECTION)</scope>
    <scope>SUBUNIT</scope>
    <scope>SUBUNIT (MICROBIAL INFECTION)</scope>
    <scope>DOMAIN</scope>
</reference>
<gene>
    <name type="primary">ompF</name>
    <name type="synonym">cmlB</name>
    <name type="synonym">coa</name>
    <name type="synonym">cry</name>
    <name type="synonym">tolF</name>
    <name type="ordered locus">b0929</name>
    <name type="ordered locus">JW0912</name>
</gene>
<organism>
    <name type="scientific">Escherichia coli (strain K12)</name>
    <dbReference type="NCBI Taxonomy" id="83333"/>
    <lineage>
        <taxon>Bacteria</taxon>
        <taxon>Pseudomonadati</taxon>
        <taxon>Pseudomonadota</taxon>
        <taxon>Gammaproteobacteria</taxon>
        <taxon>Enterobacterales</taxon>
        <taxon>Enterobacteriaceae</taxon>
        <taxon>Escherichia</taxon>
    </lineage>
</organism>
<sequence length="362" mass="39333">MMKRNILAVIVPALLVAGTANAAEIYNKDGNKVDLYGKAVGLHYFSKGNGENSYGGNGDMTYARLGFKGETQINSDLTGYGQWEYNFQGNNSEGADAQTGNKTRLAFAGLKYADVGSFDYGRNYGVVYDALGYTDMLPEFGGDTAYSDDFFVGRVGGVATYRNSNFFGLVDGLNFAVQYLGKNERDTARRSNGDGVGGSISYEYEGFGIVGAYGAADRTNLQEAQPLGNGKKAEQWATGLKYDANNIYLAANYGETRNATPITNKFTNTSGFANKTQDVLLVAQYQFDFGLRPSIAYTKSKAKDVEGIGDVDLVNYFEVGATYYFNKNMSTYVDYIINQIDSDNKLGVGSDDTVAVGIVYQF</sequence>
<keyword id="KW-0002">3D-structure</keyword>
<keyword id="KW-0998">Cell outer membrane</keyword>
<keyword id="KW-0903">Direct protein sequencing</keyword>
<keyword id="KW-0406">Ion transport</keyword>
<keyword id="KW-0472">Membrane</keyword>
<keyword id="KW-0626">Porin</keyword>
<keyword id="KW-0653">Protein transport</keyword>
<keyword id="KW-1185">Reference proteome</keyword>
<keyword id="KW-0732">Signal</keyword>
<keyword id="KW-0812">Transmembrane</keyword>
<keyword id="KW-1134">Transmembrane beta strand</keyword>
<keyword id="KW-0813">Transport</keyword>
<proteinExistence type="evidence at protein level"/>
<accession>P02931</accession>